<name>CXOL1_NPVOP</name>
<keyword id="KW-1015">Disulfide bond</keyword>
<keyword id="KW-0960">Knottin</keyword>
<keyword id="KW-1185">Reference proteome</keyword>
<keyword id="KW-0964">Secreted</keyword>
<keyword id="KW-0732">Signal</keyword>
<organism>
    <name type="scientific">Orgyia pseudotsugata multicapsid polyhedrosis virus</name>
    <name type="common">OpMNPV</name>
    <dbReference type="NCBI Taxonomy" id="262177"/>
    <lineage>
        <taxon>Viruses</taxon>
        <taxon>Viruses incertae sedis</taxon>
        <taxon>Naldaviricetes</taxon>
        <taxon>Lefavirales</taxon>
        <taxon>Baculoviridae</taxon>
        <taxon>Alphabaculovirus</taxon>
        <taxon>Alphabaculovirus orpseudotsugatae</taxon>
    </lineage>
</organism>
<sequence>MGVKSALFIMAVFAAANVQYVLAACAETGAVCVHSDECCSGACSPVFNYCLPQ</sequence>
<comment type="subcellular location">
    <subcellularLocation>
        <location>Secreted</location>
    </subcellularLocation>
</comment>
<comment type="domain">
    <text evidence="1">The presence of a 'disulfide through disulfide knot' structurally defines this protein as a knottin.</text>
</comment>
<accession>O10367</accession>
<feature type="signal peptide" evidence="2">
    <location>
        <begin position="1"/>
        <end position="18"/>
    </location>
</feature>
<feature type="peptide" id="PRO_0000034979" description="Conotoxin-like peptide 1">
    <location>
        <begin position="19"/>
        <end position="53"/>
    </location>
</feature>
<feature type="disulfide bond" evidence="1">
    <location>
        <begin position="25"/>
        <end position="39"/>
    </location>
</feature>
<feature type="disulfide bond" evidence="1">
    <location>
        <begin position="32"/>
        <end position="43"/>
    </location>
</feature>
<feature type="disulfide bond" evidence="1">
    <location>
        <begin position="38"/>
        <end position="50"/>
    </location>
</feature>
<protein>
    <recommendedName>
        <fullName>Conotoxin-like peptide 1</fullName>
    </recommendedName>
</protein>
<dbReference type="EMBL" id="U75930">
    <property type="protein sequence ID" value="AAC59135.1"/>
    <property type="molecule type" value="Genomic_DNA"/>
</dbReference>
<dbReference type="RefSeq" id="NP_046292.1">
    <property type="nucleotide sequence ID" value="NC_001875.2"/>
</dbReference>
<dbReference type="SMR" id="O10367"/>
<dbReference type="KEGG" id="vg:911996"/>
<dbReference type="OrthoDB" id="27523at10239"/>
<dbReference type="Proteomes" id="UP000009248">
    <property type="component" value="Genome"/>
</dbReference>
<dbReference type="GO" id="GO:0005576">
    <property type="term" value="C:extracellular region"/>
    <property type="evidence" value="ECO:0007669"/>
    <property type="project" value="UniProtKB-SubCell"/>
</dbReference>
<dbReference type="InterPro" id="IPR012623">
    <property type="entry name" value="Toxin_18"/>
</dbReference>
<dbReference type="Pfam" id="PF08087">
    <property type="entry name" value="Toxin_18"/>
    <property type="match status" value="1"/>
</dbReference>
<gene>
    <name type="primary">CTL-1</name>
    <name type="ORF">ORF136</name>
</gene>
<proteinExistence type="inferred from homology"/>
<evidence type="ECO:0000250" key="1"/>
<evidence type="ECO:0000255" key="2"/>
<organismHost>
    <name type="scientific">Orgyia pseudotsugata</name>
    <name type="common">Douglas-fir tussock moth</name>
    <dbReference type="NCBI Taxonomy" id="33414"/>
</organismHost>
<reference key="1">
    <citation type="journal article" date="1997" name="Virology">
        <title>The sequence of the Orgyia pseudotsugata multinucleocapsid nuclear polyhedrosis virus genome.</title>
        <authorList>
            <person name="Ahrens C.H."/>
            <person name="Russell R.R."/>
            <person name="Funk C.J."/>
            <person name="Evans J."/>
            <person name="Harwood S."/>
            <person name="Rohrmann G.F."/>
        </authorList>
    </citation>
    <scope>NUCLEOTIDE SEQUENCE [LARGE SCALE GENOMIC DNA]</scope>
</reference>